<gene>
    <name evidence="1" type="primary">nadK</name>
    <name type="ordered locus">ASA_2998</name>
</gene>
<sequence>MDSPFKTIALIGKPHHEGANQTLTGLHQYLTTRGFKVLVESRVAHTLGIMDENVMDLVQLGEQADLAIVVGGDGNMLGAARVLSRFDVAVIGVNRGNLGFLTDLSPQDYLLPLEQVLSGHYKSEHRFLLEAAVYRHGERKSSNLAVNEAVLHPGKIAHMIEFEVYIDGSFMYSQRSDGIIVATPTGSTAYSLSAGGAILTPKLNAITLVPMFPHTLSSRPIVLDADSEVRLLVSPDNQDDAMQVSCDGQVTLAVHPGDEILIKKSKHKLHLVHPLDYSYFHVLRNKLGWGSKLF</sequence>
<organism>
    <name type="scientific">Aeromonas salmonicida (strain A449)</name>
    <dbReference type="NCBI Taxonomy" id="382245"/>
    <lineage>
        <taxon>Bacteria</taxon>
        <taxon>Pseudomonadati</taxon>
        <taxon>Pseudomonadota</taxon>
        <taxon>Gammaproteobacteria</taxon>
        <taxon>Aeromonadales</taxon>
        <taxon>Aeromonadaceae</taxon>
        <taxon>Aeromonas</taxon>
    </lineage>
</organism>
<evidence type="ECO:0000255" key="1">
    <source>
        <dbReference type="HAMAP-Rule" id="MF_00361"/>
    </source>
</evidence>
<comment type="function">
    <text evidence="1">Involved in the regulation of the intracellular balance of NAD and NADP, and is a key enzyme in the biosynthesis of NADP. Catalyzes specifically the phosphorylation on 2'-hydroxyl of the adenosine moiety of NAD to yield NADP.</text>
</comment>
<comment type="catalytic activity">
    <reaction evidence="1">
        <text>NAD(+) + ATP = ADP + NADP(+) + H(+)</text>
        <dbReference type="Rhea" id="RHEA:18629"/>
        <dbReference type="ChEBI" id="CHEBI:15378"/>
        <dbReference type="ChEBI" id="CHEBI:30616"/>
        <dbReference type="ChEBI" id="CHEBI:57540"/>
        <dbReference type="ChEBI" id="CHEBI:58349"/>
        <dbReference type="ChEBI" id="CHEBI:456216"/>
        <dbReference type="EC" id="2.7.1.23"/>
    </reaction>
</comment>
<comment type="cofactor">
    <cofactor evidence="1">
        <name>a divalent metal cation</name>
        <dbReference type="ChEBI" id="CHEBI:60240"/>
    </cofactor>
</comment>
<comment type="subcellular location">
    <subcellularLocation>
        <location evidence="1">Cytoplasm</location>
    </subcellularLocation>
</comment>
<comment type="similarity">
    <text evidence="1">Belongs to the NAD kinase family.</text>
</comment>
<feature type="chain" id="PRO_1000079478" description="NAD kinase">
    <location>
        <begin position="1"/>
        <end position="294"/>
    </location>
</feature>
<feature type="active site" description="Proton acceptor" evidence="1">
    <location>
        <position position="73"/>
    </location>
</feature>
<feature type="binding site" evidence="1">
    <location>
        <begin position="73"/>
        <end position="74"/>
    </location>
    <ligand>
        <name>NAD(+)</name>
        <dbReference type="ChEBI" id="CHEBI:57540"/>
    </ligand>
</feature>
<feature type="binding site" evidence="1">
    <location>
        <begin position="147"/>
        <end position="148"/>
    </location>
    <ligand>
        <name>NAD(+)</name>
        <dbReference type="ChEBI" id="CHEBI:57540"/>
    </ligand>
</feature>
<feature type="binding site" evidence="1">
    <location>
        <position position="158"/>
    </location>
    <ligand>
        <name>NAD(+)</name>
        <dbReference type="ChEBI" id="CHEBI:57540"/>
    </ligand>
</feature>
<feature type="binding site" evidence="1">
    <location>
        <position position="175"/>
    </location>
    <ligand>
        <name>NAD(+)</name>
        <dbReference type="ChEBI" id="CHEBI:57540"/>
    </ligand>
</feature>
<feature type="binding site" evidence="1">
    <location>
        <position position="177"/>
    </location>
    <ligand>
        <name>NAD(+)</name>
        <dbReference type="ChEBI" id="CHEBI:57540"/>
    </ligand>
</feature>
<feature type="binding site" evidence="1">
    <location>
        <begin position="188"/>
        <end position="193"/>
    </location>
    <ligand>
        <name>NAD(+)</name>
        <dbReference type="ChEBI" id="CHEBI:57540"/>
    </ligand>
</feature>
<feature type="binding site" evidence="1">
    <location>
        <position position="249"/>
    </location>
    <ligand>
        <name>NAD(+)</name>
        <dbReference type="ChEBI" id="CHEBI:57540"/>
    </ligand>
</feature>
<reference key="1">
    <citation type="journal article" date="2008" name="BMC Genomics">
        <title>The genome of Aeromonas salmonicida subsp. salmonicida A449: insights into the evolution of a fish pathogen.</title>
        <authorList>
            <person name="Reith M.E."/>
            <person name="Singh R.K."/>
            <person name="Curtis B."/>
            <person name="Boyd J.M."/>
            <person name="Bouevitch A."/>
            <person name="Kimball J."/>
            <person name="Munholland J."/>
            <person name="Murphy C."/>
            <person name="Sarty D."/>
            <person name="Williams J."/>
            <person name="Nash J.H."/>
            <person name="Johnson S.C."/>
            <person name="Brown L.L."/>
        </authorList>
    </citation>
    <scope>NUCLEOTIDE SEQUENCE [LARGE SCALE GENOMIC DNA]</scope>
    <source>
        <strain>A449</strain>
    </source>
</reference>
<proteinExistence type="inferred from homology"/>
<protein>
    <recommendedName>
        <fullName evidence="1">NAD kinase</fullName>
        <ecNumber evidence="1">2.7.1.23</ecNumber>
    </recommendedName>
    <alternativeName>
        <fullName evidence="1">ATP-dependent NAD kinase</fullName>
    </alternativeName>
</protein>
<name>NADK_AERS4</name>
<accession>A4SQ27</accession>
<dbReference type="EC" id="2.7.1.23" evidence="1"/>
<dbReference type="EMBL" id="CP000644">
    <property type="protein sequence ID" value="ABO90999.1"/>
    <property type="molecule type" value="Genomic_DNA"/>
</dbReference>
<dbReference type="RefSeq" id="WP_005312583.1">
    <property type="nucleotide sequence ID" value="NC_009348.1"/>
</dbReference>
<dbReference type="SMR" id="A4SQ27"/>
<dbReference type="STRING" id="29491.GCA_000820065_02233"/>
<dbReference type="GeneID" id="79880716"/>
<dbReference type="KEGG" id="asa:ASA_2998"/>
<dbReference type="eggNOG" id="COG0061">
    <property type="taxonomic scope" value="Bacteria"/>
</dbReference>
<dbReference type="HOGENOM" id="CLU_008831_0_1_6"/>
<dbReference type="Proteomes" id="UP000000225">
    <property type="component" value="Chromosome"/>
</dbReference>
<dbReference type="GO" id="GO:0005737">
    <property type="term" value="C:cytoplasm"/>
    <property type="evidence" value="ECO:0007669"/>
    <property type="project" value="UniProtKB-SubCell"/>
</dbReference>
<dbReference type="GO" id="GO:0005524">
    <property type="term" value="F:ATP binding"/>
    <property type="evidence" value="ECO:0007669"/>
    <property type="project" value="UniProtKB-KW"/>
</dbReference>
<dbReference type="GO" id="GO:0046872">
    <property type="term" value="F:metal ion binding"/>
    <property type="evidence" value="ECO:0007669"/>
    <property type="project" value="UniProtKB-UniRule"/>
</dbReference>
<dbReference type="GO" id="GO:0051287">
    <property type="term" value="F:NAD binding"/>
    <property type="evidence" value="ECO:0007669"/>
    <property type="project" value="UniProtKB-ARBA"/>
</dbReference>
<dbReference type="GO" id="GO:0003951">
    <property type="term" value="F:NAD+ kinase activity"/>
    <property type="evidence" value="ECO:0007669"/>
    <property type="project" value="UniProtKB-UniRule"/>
</dbReference>
<dbReference type="GO" id="GO:0019674">
    <property type="term" value="P:NAD metabolic process"/>
    <property type="evidence" value="ECO:0007669"/>
    <property type="project" value="InterPro"/>
</dbReference>
<dbReference type="GO" id="GO:0006741">
    <property type="term" value="P:NADP biosynthetic process"/>
    <property type="evidence" value="ECO:0007669"/>
    <property type="project" value="UniProtKB-UniRule"/>
</dbReference>
<dbReference type="FunFam" id="2.60.200.30:FF:000001">
    <property type="entry name" value="NAD kinase"/>
    <property type="match status" value="1"/>
</dbReference>
<dbReference type="Gene3D" id="3.40.50.10330">
    <property type="entry name" value="Probable inorganic polyphosphate/atp-NAD kinase, domain 1"/>
    <property type="match status" value="1"/>
</dbReference>
<dbReference type="Gene3D" id="2.60.200.30">
    <property type="entry name" value="Probable inorganic polyphosphate/atp-NAD kinase, domain 2"/>
    <property type="match status" value="1"/>
</dbReference>
<dbReference type="HAMAP" id="MF_00361">
    <property type="entry name" value="NAD_kinase"/>
    <property type="match status" value="1"/>
</dbReference>
<dbReference type="InterPro" id="IPR017438">
    <property type="entry name" value="ATP-NAD_kinase_N"/>
</dbReference>
<dbReference type="InterPro" id="IPR017437">
    <property type="entry name" value="ATP-NAD_kinase_PpnK-typ_C"/>
</dbReference>
<dbReference type="InterPro" id="IPR016064">
    <property type="entry name" value="NAD/diacylglycerol_kinase_sf"/>
</dbReference>
<dbReference type="InterPro" id="IPR002504">
    <property type="entry name" value="NADK"/>
</dbReference>
<dbReference type="NCBIfam" id="NF002306">
    <property type="entry name" value="PRK01231.1"/>
    <property type="match status" value="1"/>
</dbReference>
<dbReference type="NCBIfam" id="NF002893">
    <property type="entry name" value="PRK03378.1"/>
    <property type="match status" value="1"/>
</dbReference>
<dbReference type="PANTHER" id="PTHR20275">
    <property type="entry name" value="NAD KINASE"/>
    <property type="match status" value="1"/>
</dbReference>
<dbReference type="PANTHER" id="PTHR20275:SF0">
    <property type="entry name" value="NAD KINASE"/>
    <property type="match status" value="1"/>
</dbReference>
<dbReference type="Pfam" id="PF01513">
    <property type="entry name" value="NAD_kinase"/>
    <property type="match status" value="1"/>
</dbReference>
<dbReference type="Pfam" id="PF20143">
    <property type="entry name" value="NAD_kinase_C"/>
    <property type="match status" value="1"/>
</dbReference>
<dbReference type="SUPFAM" id="SSF111331">
    <property type="entry name" value="NAD kinase/diacylglycerol kinase-like"/>
    <property type="match status" value="1"/>
</dbReference>
<keyword id="KW-0067">ATP-binding</keyword>
<keyword id="KW-0963">Cytoplasm</keyword>
<keyword id="KW-0418">Kinase</keyword>
<keyword id="KW-0520">NAD</keyword>
<keyword id="KW-0521">NADP</keyword>
<keyword id="KW-0547">Nucleotide-binding</keyword>
<keyword id="KW-0808">Transferase</keyword>